<comment type="function">
    <text evidence="2 3">The fumarate reductase enzyme complex is required for fumarate respiration using formate or sulfide as electron donor. This subunit anchors the complex in the membrane and binds a diheme cytochrome b.</text>
</comment>
<comment type="cofactor">
    <cofactor evidence="1 2">
        <name>heme b</name>
        <dbReference type="ChEBI" id="CHEBI:60344"/>
    </cofactor>
    <text evidence="1 2">Binds 2 heme b molecules per subunit, called the proximal (bP) and distal (bD) hemes.</text>
</comment>
<comment type="subunit">
    <text evidence="1">Part of an enzyme complex containing three subunits: a flavoprotein (frdA), an iron-sulfur protein (frdB), and diheme cytochrome b (frdC).</text>
</comment>
<comment type="subcellular location">
    <subcellularLocation>
        <location evidence="5">Cell inner membrane</location>
        <topology evidence="1 2">Multi-pass membrane protein</topology>
    </subcellularLocation>
</comment>
<comment type="similarity">
    <text evidence="5">Belongs to the diheme cytochrome b FrdC family.</text>
</comment>
<name>FRDC_WOLSU</name>
<organism>
    <name type="scientific">Wolinella succinogenes (strain ATCC 29543 / DSM 1740 / CCUG 13145 / JCM 31913 / LMG 7466 / NCTC 11488 / FDC 602W)</name>
    <name type="common">Vibrio succinogenes</name>
    <dbReference type="NCBI Taxonomy" id="273121"/>
    <lineage>
        <taxon>Bacteria</taxon>
        <taxon>Pseudomonadati</taxon>
        <taxon>Campylobacterota</taxon>
        <taxon>Epsilonproteobacteria</taxon>
        <taxon>Campylobacterales</taxon>
        <taxon>Helicobacteraceae</taxon>
        <taxon>Wolinella</taxon>
    </lineage>
</organism>
<reference key="1">
    <citation type="journal article" date="1990" name="Mol. Microbiol.">
        <title>Wolinella succinogenes fumarate reductase contains a dihaem cytochrome b.</title>
        <authorList>
            <person name="Koertner C."/>
            <person name="Lauterbach F."/>
            <person name="Tripier D."/>
            <person name="Unden G."/>
            <person name="Kroeger A."/>
        </authorList>
    </citation>
    <scope>NUCLEOTIDE SEQUENCE [GENOMIC DNA]</scope>
    <scope>PARTIAL PROTEIN SEQUENCE</scope>
</reference>
<reference key="2">
    <citation type="journal article" date="1998" name="Eur. J. Biochem.">
        <title>Deletion and site-directed mutagenesis of the Wolinella succinogenes fumarate reductase operon.</title>
        <authorList>
            <person name="Simon J."/>
            <person name="Gross R."/>
            <person name="Ringel M."/>
            <person name="Schmidt E."/>
            <person name="Kroeger A."/>
        </authorList>
    </citation>
    <scope>NUCLEOTIDE SEQUENCE [GENOMIC DNA]</scope>
    <scope>FUNCTION</scope>
    <scope>MUTAGENESIS OF HIS-44; HIS-93; HIS-114; HIS-120; HIS-143 AND HIS-182</scope>
</reference>
<reference key="3">
    <citation type="journal article" date="2003" name="Proc. Natl. Acad. Sci. U.S.A.">
        <title>Complete genome sequence and analysis of Wolinella succinogenes.</title>
        <authorList>
            <person name="Baar C."/>
            <person name="Eppinger M."/>
            <person name="Raddatz G."/>
            <person name="Simon J."/>
            <person name="Lanz C."/>
            <person name="Klimmek O."/>
            <person name="Nandakumar R."/>
            <person name="Gross R."/>
            <person name="Rosinus A."/>
            <person name="Keller H."/>
            <person name="Jagtap P."/>
            <person name="Linke B."/>
            <person name="Meyer F."/>
            <person name="Lederer H."/>
            <person name="Schuster S.C."/>
        </authorList>
    </citation>
    <scope>NUCLEOTIDE SEQUENCE [LARGE SCALE GENOMIC DNA]</scope>
    <source>
        <strain>ATCC 29543 / DSM 1740 / CCUG 13145 / JCM 31913 / LMG 7466 / NCTC 11488 / FDC 602W</strain>
    </source>
</reference>
<reference key="4">
    <citation type="journal article" date="1990" name="Arch. Microbiol.">
        <title>The fumarate reductase operon of Wolinella succinogenes. Sequence and expression of the frdA and frdB genes.</title>
        <authorList>
            <person name="Lauterbach F."/>
            <person name="Koertner C."/>
            <person name="Albracht S.P."/>
            <person name="Unden G."/>
            <person name="Kroeger A."/>
        </authorList>
    </citation>
    <scope>NUCLEOTIDE SEQUENCE [GENOMIC DNA] OF 205-256</scope>
</reference>
<reference evidence="7" key="5">
    <citation type="journal article" date="1999" name="Nature">
        <title>Structure of fumarate reductase from Wolinella succinogenes at 2.2 A resolution.</title>
        <authorList>
            <person name="Lancaster C.R.D."/>
            <person name="Kroeger A."/>
            <person name="Auer M."/>
            <person name="Michel H."/>
        </authorList>
    </citation>
    <scope>X-RAY CRYSTALLOGRAPHY (2.2 ANGSTROMS) IN COMPLEX WITH HEME</scope>
    <scope>COFACTOR</scope>
    <scope>SUBUNIT</scope>
    <scope>SUBCELLULAR LOCATION</scope>
    <scope>TOPOLOGY</scope>
</reference>
<reference evidence="6" key="6">
    <citation type="journal article" date="2001" name="Eur. J. Biochem.">
        <title>A third crystal form of Wolinella succinogenes quinol:fumarate reductase reveals domain closure at the site of fumarate reduction.</title>
        <authorList>
            <person name="Lancaster C.R.D."/>
            <person name="Gross R."/>
            <person name="Simon J."/>
        </authorList>
    </citation>
    <scope>X-RAY CRYSTALLOGRAPHY (3.1 ANGSTROMS) IN COMPLEX WITH HEME</scope>
    <scope>FUNCTION</scope>
    <scope>COFACTOR</scope>
    <scope>SUBUNIT</scope>
    <scope>SUBCELLULAR LOCATION</scope>
</reference>
<reference key="7">
    <citation type="journal article" date="2001" name="FEBS Lett.">
        <title>Succinate:quinone oxidoreductases -- what can we learn from Wolinella succinogenes quinol:fumarate reductase?</title>
        <authorList>
            <person name="Lancaster C.R.D."/>
        </authorList>
    </citation>
    <scope>REVIEW</scope>
</reference>
<accession>P17413</accession>
<feature type="chain" id="PRO_0000158685" description="Fumarate reductase cytochrome b subunit">
    <location>
        <begin position="1"/>
        <end position="256"/>
    </location>
</feature>
<feature type="topological domain" description="Cytoplasmic" evidence="1">
    <location>
        <begin position="1"/>
        <end position="30"/>
    </location>
</feature>
<feature type="transmembrane region" description="Helical">
    <location>
        <begin position="31"/>
        <end position="52"/>
    </location>
</feature>
<feature type="topological domain" description="Periplasmic">
    <location>
        <begin position="53"/>
        <end position="76"/>
    </location>
</feature>
<feature type="transmembrane region" description="Helical">
    <location>
        <begin position="77"/>
        <end position="98"/>
    </location>
</feature>
<feature type="topological domain" description="Cytoplasmic">
    <location>
        <begin position="99"/>
        <end position="124"/>
    </location>
</feature>
<feature type="transmembrane region" description="Helical">
    <location>
        <begin position="125"/>
        <end position="149"/>
    </location>
</feature>
<feature type="topological domain" description="Periplasmic">
    <location>
        <begin position="150"/>
        <end position="165"/>
    </location>
</feature>
<feature type="transmembrane region" description="Helical">
    <location>
        <begin position="166"/>
        <end position="188"/>
    </location>
</feature>
<feature type="topological domain" description="Cytoplasmic">
    <location>
        <begin position="189"/>
        <end position="206"/>
    </location>
</feature>
<feature type="transmembrane region" description="Helical">
    <location>
        <begin position="207"/>
        <end position="230"/>
    </location>
</feature>
<feature type="topological domain" description="Periplasmic" evidence="1">
    <location>
        <begin position="231"/>
        <end position="256"/>
    </location>
</feature>
<feature type="binding site" description="axial binding residue" evidence="1 2 6 7 8 9 10">
    <location>
        <position position="44"/>
    </location>
    <ligand>
        <name>heme b</name>
        <dbReference type="ChEBI" id="CHEBI:60344"/>
        <label>bD</label>
    </ligand>
    <ligandPart>
        <name>Fe</name>
        <dbReference type="ChEBI" id="CHEBI:18248"/>
    </ligandPart>
</feature>
<feature type="binding site" description="axial binding residue" evidence="1 2 6 7 8 9 10">
    <location>
        <position position="93"/>
    </location>
    <ligand>
        <name>heme b</name>
        <dbReference type="ChEBI" id="CHEBI:60344"/>
        <label>bP</label>
    </ligand>
    <ligandPart>
        <name>Fe</name>
        <dbReference type="ChEBI" id="CHEBI:18248"/>
    </ligandPart>
</feature>
<feature type="binding site" description="axial binding residue" evidence="1 2 6 7 8 9 10">
    <location>
        <position position="143"/>
    </location>
    <ligand>
        <name>heme b</name>
        <dbReference type="ChEBI" id="CHEBI:60344"/>
        <label>bD</label>
    </ligand>
    <ligandPart>
        <name>Fe</name>
        <dbReference type="ChEBI" id="CHEBI:18248"/>
    </ligandPart>
</feature>
<feature type="binding site" description="axial binding residue" evidence="1 2 6 7 8 9 10">
    <location>
        <position position="182"/>
    </location>
    <ligand>
        <name>heme b</name>
        <dbReference type="ChEBI" id="CHEBI:60344"/>
        <label>bP</label>
    </ligand>
    <ligandPart>
        <name>Fe</name>
        <dbReference type="ChEBI" id="CHEBI:18248"/>
    </ligandPart>
</feature>
<feature type="mutagenesis site" description="Loss of fumarate reductase activity." evidence="3">
    <original>H</original>
    <variation>A</variation>
    <location>
        <position position="44"/>
    </location>
</feature>
<feature type="mutagenesis site" description="Loss of fumarate reductase activity." evidence="3">
    <original>H</original>
    <variation>A</variation>
    <location>
        <position position="93"/>
    </location>
</feature>
<feature type="mutagenesis site" description="Slight reduction in fumarate reductase activity." evidence="3">
    <original>H</original>
    <variation>A</variation>
    <location>
        <position position="114"/>
    </location>
</feature>
<feature type="mutagenesis site" description="Reduction in fumarate reductase activity." evidence="3">
    <original>H</original>
    <variation>A</variation>
    <location>
        <position position="120"/>
    </location>
</feature>
<feature type="mutagenesis site" description="Loss of fumarate reductase activity." evidence="3">
    <original>H</original>
    <variation>A</variation>
    <variation>M</variation>
    <variation>K</variation>
    <location>
        <position position="143"/>
    </location>
</feature>
<feature type="mutagenesis site" description="Loss of fumarate reductase activity." evidence="3">
    <original>H</original>
    <variation>A</variation>
    <location>
        <position position="182"/>
    </location>
</feature>
<feature type="helix" evidence="12">
    <location>
        <begin position="3"/>
        <end position="11"/>
    </location>
</feature>
<feature type="helix" evidence="12">
    <location>
        <begin position="22"/>
        <end position="48"/>
    </location>
</feature>
<feature type="helix" evidence="12">
    <location>
        <begin position="49"/>
        <end position="52"/>
    </location>
</feature>
<feature type="helix" evidence="12">
    <location>
        <begin position="55"/>
        <end position="64"/>
    </location>
</feature>
<feature type="strand" evidence="11">
    <location>
        <begin position="65"/>
        <end position="67"/>
    </location>
</feature>
<feature type="turn" evidence="12">
    <location>
        <begin position="68"/>
        <end position="70"/>
    </location>
</feature>
<feature type="strand" evidence="12">
    <location>
        <begin position="71"/>
        <end position="73"/>
    </location>
</feature>
<feature type="helix" evidence="12">
    <location>
        <begin position="77"/>
        <end position="97"/>
    </location>
</feature>
<feature type="helix" evidence="12">
    <location>
        <begin position="98"/>
        <end position="100"/>
    </location>
</feature>
<feature type="helix" evidence="12">
    <location>
        <begin position="105"/>
        <end position="118"/>
    </location>
</feature>
<feature type="helix" evidence="12">
    <location>
        <begin position="121"/>
        <end position="149"/>
    </location>
</feature>
<feature type="helix" evidence="12">
    <location>
        <begin position="151"/>
        <end position="153"/>
    </location>
</feature>
<feature type="helix" evidence="12">
    <location>
        <begin position="158"/>
        <end position="164"/>
    </location>
</feature>
<feature type="turn" evidence="11">
    <location>
        <begin position="165"/>
        <end position="167"/>
    </location>
</feature>
<feature type="helix" evidence="12">
    <location>
        <begin position="169"/>
        <end position="194"/>
    </location>
</feature>
<feature type="turn" evidence="12">
    <location>
        <begin position="195"/>
        <end position="197"/>
    </location>
</feature>
<feature type="helix" evidence="12">
    <location>
        <begin position="202"/>
        <end position="235"/>
    </location>
</feature>
<feature type="turn" evidence="12">
    <location>
        <begin position="246"/>
        <end position="252"/>
    </location>
</feature>
<gene>
    <name type="primary">frdC</name>
    <name type="ordered locus">WS0832</name>
</gene>
<keyword id="KW-0002">3D-structure</keyword>
<keyword id="KW-0997">Cell inner membrane</keyword>
<keyword id="KW-1003">Cell membrane</keyword>
<keyword id="KW-0903">Direct protein sequencing</keyword>
<keyword id="KW-0249">Electron transport</keyword>
<keyword id="KW-0349">Heme</keyword>
<keyword id="KW-0408">Iron</keyword>
<keyword id="KW-0472">Membrane</keyword>
<keyword id="KW-0479">Metal-binding</keyword>
<keyword id="KW-1185">Reference proteome</keyword>
<keyword id="KW-0679">Respiratory chain</keyword>
<keyword id="KW-0812">Transmembrane</keyword>
<keyword id="KW-1133">Transmembrane helix</keyword>
<keyword id="KW-0813">Transport</keyword>
<keyword id="KW-0816">Tricarboxylic acid cycle</keyword>
<evidence type="ECO:0000269" key="1">
    <source>
    </source>
</evidence>
<evidence type="ECO:0000269" key="2">
    <source>
    </source>
</evidence>
<evidence type="ECO:0000269" key="3">
    <source>
    </source>
</evidence>
<evidence type="ECO:0000303" key="4">
    <source>
    </source>
</evidence>
<evidence type="ECO:0000305" key="5"/>
<evidence type="ECO:0007744" key="6">
    <source>
        <dbReference type="PDB" id="1E7P"/>
    </source>
</evidence>
<evidence type="ECO:0007744" key="7">
    <source>
        <dbReference type="PDB" id="1QLB"/>
    </source>
</evidence>
<evidence type="ECO:0007744" key="8">
    <source>
        <dbReference type="PDB" id="2BS2"/>
    </source>
</evidence>
<evidence type="ECO:0007744" key="9">
    <source>
        <dbReference type="PDB" id="2BS3"/>
    </source>
</evidence>
<evidence type="ECO:0007744" key="10">
    <source>
        <dbReference type="PDB" id="2BS4"/>
    </source>
</evidence>
<evidence type="ECO:0007829" key="11">
    <source>
        <dbReference type="PDB" id="1QLB"/>
    </source>
</evidence>
<evidence type="ECO:0007829" key="12">
    <source>
        <dbReference type="PDB" id="2BS2"/>
    </source>
</evidence>
<sequence length="256" mass="29723">MTNESILESYSGVTPERKKSRMPAKLDWWQSATGLFLGLFMIGHMFFVSTILLGDNVMLWVTKKFELDFIFEGGKPIVVSFLAAFVFAVFIAHAFLAMRKFPINYRQYLTFKTHKDLMRHGDTTLWWIQAMTGFAMFFLGSVHLYIMMTQPQTIGPVSSSFRMVSEWMWPLYLVLLFAVELHGSVGLYRLAVKWGWFDGETPDKTRANLKKLKTLMSAFLIVLGLLTFGAYVKKGLEQTDPNIDYKYFDYKRTHHR</sequence>
<protein>
    <recommendedName>
        <fullName>Fumarate reductase cytochrome b subunit</fullName>
    </recommendedName>
    <alternativeName>
        <fullName evidence="4">Quinol-fumarate reductase cytochrome b subunit</fullName>
        <shortName evidence="4">QFR cytochrome b subunit</shortName>
    </alternativeName>
</protein>
<proteinExistence type="evidence at protein level"/>
<dbReference type="EMBL" id="AJ000662">
    <property type="protein sequence ID" value="CAA04213.1"/>
    <property type="molecule type" value="Genomic_DNA"/>
</dbReference>
<dbReference type="EMBL" id="BX571659">
    <property type="protein sequence ID" value="CAE09943.1"/>
    <property type="molecule type" value="Genomic_DNA"/>
</dbReference>
<dbReference type="PIR" id="S10164">
    <property type="entry name" value="S10164"/>
</dbReference>
<dbReference type="RefSeq" id="WP_011138740.1">
    <property type="nucleotide sequence ID" value="NC_005090.1"/>
</dbReference>
<dbReference type="PDB" id="1E7P">
    <property type="method" value="X-ray"/>
    <property type="resolution" value="3.10 A"/>
    <property type="chains" value="C/F/I/L=1-256"/>
</dbReference>
<dbReference type="PDB" id="1QLB">
    <property type="method" value="X-ray"/>
    <property type="resolution" value="2.33 A"/>
    <property type="chains" value="C/F=1-256"/>
</dbReference>
<dbReference type="PDB" id="2BS2">
    <property type="method" value="X-ray"/>
    <property type="resolution" value="1.78 A"/>
    <property type="chains" value="C/F=1-254"/>
</dbReference>
<dbReference type="PDB" id="2BS3">
    <property type="method" value="X-ray"/>
    <property type="resolution" value="2.19 A"/>
    <property type="chains" value="C/F=1-256"/>
</dbReference>
<dbReference type="PDB" id="2BS4">
    <property type="method" value="X-ray"/>
    <property type="resolution" value="2.76 A"/>
    <property type="chains" value="C/F=1-256"/>
</dbReference>
<dbReference type="PDBsum" id="1E7P"/>
<dbReference type="PDBsum" id="1QLB"/>
<dbReference type="PDBsum" id="2BS2"/>
<dbReference type="PDBsum" id="2BS3"/>
<dbReference type="PDBsum" id="2BS4"/>
<dbReference type="SMR" id="P17413"/>
<dbReference type="STRING" id="273121.WS0832"/>
<dbReference type="DrugBank" id="DB07669">
    <property type="generic name" value="2,3-Dimethyl-1,4-naphthoquinone"/>
</dbReference>
<dbReference type="TCDB" id="3.D.10.1.3">
    <property type="family name" value="the prokaryotic succinate dehydrogenase (sdh) family"/>
</dbReference>
<dbReference type="KEGG" id="wsu:WS0832"/>
<dbReference type="eggNOG" id="ENOG5031HUY">
    <property type="taxonomic scope" value="Bacteria"/>
</dbReference>
<dbReference type="HOGENOM" id="CLU_075821_0_0_7"/>
<dbReference type="BRENDA" id="1.3.5.4">
    <property type="organism ID" value="6642"/>
</dbReference>
<dbReference type="EvolutionaryTrace" id="P17413"/>
<dbReference type="Proteomes" id="UP000000422">
    <property type="component" value="Chromosome"/>
</dbReference>
<dbReference type="GO" id="GO:0005886">
    <property type="term" value="C:plasma membrane"/>
    <property type="evidence" value="ECO:0007669"/>
    <property type="project" value="UniProtKB-SubCell"/>
</dbReference>
<dbReference type="GO" id="GO:0046872">
    <property type="term" value="F:metal ion binding"/>
    <property type="evidence" value="ECO:0007669"/>
    <property type="project" value="UniProtKB-KW"/>
</dbReference>
<dbReference type="GO" id="GO:0006099">
    <property type="term" value="P:tricarboxylic acid cycle"/>
    <property type="evidence" value="ECO:0007669"/>
    <property type="project" value="UniProtKB-KW"/>
</dbReference>
<dbReference type="CDD" id="cd00581">
    <property type="entry name" value="QFR_TypeB_TM"/>
    <property type="match status" value="1"/>
</dbReference>
<dbReference type="Gene3D" id="1.20.1300.10">
    <property type="entry name" value="Fumarate reductase/succinate dehydrogenase, transmembrane subunit"/>
    <property type="match status" value="1"/>
</dbReference>
<dbReference type="InterPro" id="IPR004224">
    <property type="entry name" value="Fum_red_B_TM"/>
</dbReference>
<dbReference type="InterPro" id="IPR034804">
    <property type="entry name" value="SQR/QFR_C/D"/>
</dbReference>
<dbReference type="InterPro" id="IPR000701">
    <property type="entry name" value="SuccDH_FuR_B_TM-su"/>
</dbReference>
<dbReference type="NCBIfam" id="NF010072">
    <property type="entry name" value="PRK13553.1"/>
    <property type="match status" value="1"/>
</dbReference>
<dbReference type="Pfam" id="PF01127">
    <property type="entry name" value="Sdh_cyt"/>
    <property type="match status" value="1"/>
</dbReference>
<dbReference type="PIRSF" id="PIRSF000177">
    <property type="entry name" value="Fumar_rd_cyt_b"/>
    <property type="match status" value="1"/>
</dbReference>
<dbReference type="SUPFAM" id="SSF81343">
    <property type="entry name" value="Fumarate reductase respiratory complex transmembrane subunits"/>
    <property type="match status" value="1"/>
</dbReference>